<reference key="1">
    <citation type="journal article" date="1989" name="Mol. Gen. Genet.">
        <title>The complete sequence of the rice (Oryza sativa) chloroplast genome: intermolecular recombination between distinct tRNA genes accounts for a major plastid DNA inversion during the evolution of the cereals.</title>
        <authorList>
            <person name="Hiratsuka J."/>
            <person name="Shimada H."/>
            <person name="Whittier R."/>
            <person name="Ishibashi T."/>
            <person name="Sakamoto M."/>
            <person name="Mori M."/>
            <person name="Kondo C."/>
            <person name="Honji Y."/>
            <person name="Sun C.-R."/>
            <person name="Meng B.-Y."/>
            <person name="Li Y.-Q."/>
            <person name="Kanno A."/>
            <person name="Nishizawa Y."/>
            <person name="Hirai A."/>
            <person name="Shinozaki K."/>
            <person name="Sugiura M."/>
        </authorList>
    </citation>
    <scope>NUCLEOTIDE SEQUENCE [LARGE SCALE GENOMIC DNA]</scope>
    <source>
        <strain>cv. Nipponbare</strain>
    </source>
</reference>
<reference key="2">
    <citation type="journal article" date="2004" name="Plant Physiol.">
        <title>A comparison of rice chloroplast genomes.</title>
        <authorList>
            <person name="Tang J."/>
            <person name="Xia H."/>
            <person name="Cao M."/>
            <person name="Zhang X."/>
            <person name="Zeng W."/>
            <person name="Hu S."/>
            <person name="Tong W."/>
            <person name="Wang J."/>
            <person name="Wang J."/>
            <person name="Yu J."/>
            <person name="Yang H."/>
            <person name="Zhu L."/>
        </authorList>
    </citation>
    <scope>NUCLEOTIDE SEQUENCE [LARGE SCALE GENOMIC DNA]</scope>
    <source>
        <strain>cv. Nipponbare</strain>
    </source>
</reference>
<reference key="3">
    <citation type="journal article" date="1994" name="Proc. Natl. Acad. Sci. U.S.A.">
        <title>Complete RNA editing of unspliced and dicistronic transcripts of the intron-containing reading frame IRF170 from maize chloroplasts.</title>
        <authorList>
            <person name="Ruf S."/>
            <person name="Zeltz P."/>
            <person name="Koessel H."/>
        </authorList>
    </citation>
    <scope>SUGGESTION THAT RNA EDITING OCCURS AT POSITION 62</scope>
</reference>
<feature type="chain" id="PRO_0000217815" description="Photosystem I assembly protein Ycf3">
    <location>
        <begin position="1"/>
        <end position="170"/>
    </location>
</feature>
<feature type="repeat" description="TPR 1">
    <location>
        <begin position="35"/>
        <end position="68"/>
    </location>
</feature>
<feature type="repeat" description="TPR 2">
    <location>
        <begin position="72"/>
        <end position="105"/>
    </location>
</feature>
<feature type="repeat" description="TPR 3">
    <location>
        <begin position="120"/>
        <end position="153"/>
    </location>
</feature>
<feature type="sequence conflict" description="In Ref. 1; CAA33997." evidence="3" ref="1">
    <original>I</original>
    <variation>S</variation>
    <location>
        <position position="66"/>
    </location>
</feature>
<feature type="sequence conflict" description="In Ref. 1; CAA33997." evidence="3" ref="1">
    <original>A</original>
    <variation>G</variation>
    <location>
        <position position="148"/>
    </location>
</feature>
<evidence type="ECO:0000250" key="1"/>
<evidence type="ECO:0000255" key="2">
    <source>
        <dbReference type="HAMAP-Rule" id="MF_00439"/>
    </source>
</evidence>
<evidence type="ECO:0000305" key="3"/>
<accession>P12203</accession>
<geneLocation type="chloroplast"/>
<organism>
    <name type="scientific">Oryza sativa subsp. japonica</name>
    <name type="common">Rice</name>
    <dbReference type="NCBI Taxonomy" id="39947"/>
    <lineage>
        <taxon>Eukaryota</taxon>
        <taxon>Viridiplantae</taxon>
        <taxon>Streptophyta</taxon>
        <taxon>Embryophyta</taxon>
        <taxon>Tracheophyta</taxon>
        <taxon>Spermatophyta</taxon>
        <taxon>Magnoliopsida</taxon>
        <taxon>Liliopsida</taxon>
        <taxon>Poales</taxon>
        <taxon>Poaceae</taxon>
        <taxon>BOP clade</taxon>
        <taxon>Oryzoideae</taxon>
        <taxon>Oryzeae</taxon>
        <taxon>Oryzinae</taxon>
        <taxon>Oryza</taxon>
        <taxon>Oryza sativa</taxon>
    </lineage>
</organism>
<name>YCF3_ORYSJ</name>
<sequence length="170" mass="19844">MPRSRINGNFIDKTFSIVANILLRIIPTTSGEKRAFTYYRDGMLAQSEGNYAEALQNYYEAMRLEIDPYDRSYILYNIGLIHTSNGEHTKALEYYFRALERNPFLPQAFNNMAVICHYRGEQAILQGDSEIAEAWFDQAAEYWKQAIALTPGNYIEAQNWLKITKRFEFE</sequence>
<keyword id="KW-0150">Chloroplast</keyword>
<keyword id="KW-0472">Membrane</keyword>
<keyword id="KW-0602">Photosynthesis</keyword>
<keyword id="KW-0934">Plastid</keyword>
<keyword id="KW-1185">Reference proteome</keyword>
<keyword id="KW-0677">Repeat</keyword>
<keyword id="KW-0691">RNA editing</keyword>
<keyword id="KW-0793">Thylakoid</keyword>
<keyword id="KW-0802">TPR repeat</keyword>
<comment type="function">
    <text evidence="2">Essential for the assembly of the photosystem I (PSI) complex. May act as a chaperone-like factor to guide the assembly of the PSI subunits.</text>
</comment>
<comment type="subcellular location">
    <subcellularLocation>
        <location evidence="2">Plastid</location>
        <location evidence="2">Chloroplast thylakoid membrane</location>
        <topology evidence="2">Peripheral membrane protein</topology>
    </subcellularLocation>
</comment>
<comment type="RNA editing">
    <location>
        <position position="62" evidence="1"/>
    </location>
</comment>
<comment type="similarity">
    <text evidence="2">Belongs to the Ycf3 family.</text>
</comment>
<dbReference type="EMBL" id="X15901">
    <property type="protein sequence ID" value="CAA33997.1"/>
    <property type="status" value="ALT_SEQ"/>
    <property type="molecule type" value="Genomic_DNA"/>
</dbReference>
<dbReference type="EMBL" id="AY522330">
    <property type="status" value="NOT_ANNOTATED_CDS"/>
    <property type="molecule type" value="Genomic_DNA"/>
</dbReference>
<dbReference type="PIR" id="S05104">
    <property type="entry name" value="S05104"/>
</dbReference>
<dbReference type="RefSeq" id="NP_039384.1">
    <property type="nucleotide sequence ID" value="NC_001320.1"/>
</dbReference>
<dbReference type="SMR" id="P12203"/>
<dbReference type="FunCoup" id="P12203">
    <property type="interactions" value="26"/>
</dbReference>
<dbReference type="STRING" id="39947.P12203"/>
<dbReference type="PaxDb" id="39947-P12203"/>
<dbReference type="GeneID" id="3131456"/>
<dbReference type="KEGG" id="dosa:CAA33997.1"/>
<dbReference type="KEGG" id="osa:3131456"/>
<dbReference type="InParanoid" id="P12203"/>
<dbReference type="OrthoDB" id="613316at2759"/>
<dbReference type="Proteomes" id="UP000059680">
    <property type="component" value="Chloroplast"/>
</dbReference>
<dbReference type="GO" id="GO:0009535">
    <property type="term" value="C:chloroplast thylakoid membrane"/>
    <property type="evidence" value="ECO:0007669"/>
    <property type="project" value="UniProtKB-SubCell"/>
</dbReference>
<dbReference type="GO" id="GO:0009536">
    <property type="term" value="C:plastid"/>
    <property type="evidence" value="ECO:0000250"/>
    <property type="project" value="Gramene"/>
</dbReference>
<dbReference type="GO" id="GO:0048564">
    <property type="term" value="P:photosystem I assembly"/>
    <property type="evidence" value="ECO:0000318"/>
    <property type="project" value="GO_Central"/>
</dbReference>
<dbReference type="FunFam" id="1.25.40.10:FF:000004">
    <property type="entry name" value="Photosystem I assembly protein Ycf3"/>
    <property type="match status" value="1"/>
</dbReference>
<dbReference type="Gene3D" id="1.25.40.10">
    <property type="entry name" value="Tetratricopeptide repeat domain"/>
    <property type="match status" value="1"/>
</dbReference>
<dbReference type="HAMAP" id="MF_00439">
    <property type="entry name" value="Ycf3"/>
    <property type="match status" value="1"/>
</dbReference>
<dbReference type="InterPro" id="IPR022818">
    <property type="entry name" value="PSI_Ycf3_assembly"/>
</dbReference>
<dbReference type="InterPro" id="IPR011990">
    <property type="entry name" value="TPR-like_helical_dom_sf"/>
</dbReference>
<dbReference type="InterPro" id="IPR019734">
    <property type="entry name" value="TPR_rpt"/>
</dbReference>
<dbReference type="InterPro" id="IPR051685">
    <property type="entry name" value="Ycf3/AcsC/BcsC/TPR_MFPF"/>
</dbReference>
<dbReference type="NCBIfam" id="NF002725">
    <property type="entry name" value="PRK02603.1"/>
    <property type="match status" value="1"/>
</dbReference>
<dbReference type="PANTHER" id="PTHR44943">
    <property type="entry name" value="CELLULOSE SYNTHASE OPERON PROTEIN C"/>
    <property type="match status" value="1"/>
</dbReference>
<dbReference type="PANTHER" id="PTHR44943:SF8">
    <property type="entry name" value="TPR REPEAT-CONTAINING PROTEIN MJ0263"/>
    <property type="match status" value="1"/>
</dbReference>
<dbReference type="Pfam" id="PF00515">
    <property type="entry name" value="TPR_1"/>
    <property type="match status" value="1"/>
</dbReference>
<dbReference type="SMART" id="SM00028">
    <property type="entry name" value="TPR"/>
    <property type="match status" value="3"/>
</dbReference>
<dbReference type="SUPFAM" id="SSF48452">
    <property type="entry name" value="TPR-like"/>
    <property type="match status" value="1"/>
</dbReference>
<dbReference type="PROSITE" id="PS50005">
    <property type="entry name" value="TPR"/>
    <property type="match status" value="3"/>
</dbReference>
<dbReference type="PROSITE" id="PS50293">
    <property type="entry name" value="TPR_REGION"/>
    <property type="match status" value="1"/>
</dbReference>
<gene>
    <name evidence="2" type="primary">ycf3</name>
    <name type="ordered locus">LOC_Osp1g00350</name>
</gene>
<protein>
    <recommendedName>
        <fullName evidence="2">Photosystem I assembly protein Ycf3</fullName>
    </recommendedName>
</protein>
<proteinExistence type="evidence at transcript level"/>